<comment type="function">
    <text evidence="5 9 10 12 13 15">Polycomb group (PcG) protein. Catalytic subunit of some PcG multiprotein complex, which methylates 'Lys-27' of histone H3, leading to transcriptional repression of the affected target genes. Required to prevent the proliferation of the central cell of the female gametophyte by repressing target genes before fertilization. After fertilization, it probably also regulates the embryo and endosperm proliferation and anteroposterior organization during seed development. PcG proteins act by forming multiprotein complexes, which are required to maintain the transcriptionally repressive state of homeotic genes throughout development. PcG proteins are not required to initiate repression, but to maintain it during later stages of development. Interacts with the promoter and repress the transcription of genes such as PHE1 and PHE2, that are paternally active and maternally silenced genes.</text>
</comment>
<comment type="catalytic activity">
    <reaction evidence="2">
        <text>L-lysyl(27)-[histone H3] + 3 S-adenosyl-L-methionine = N(6),N(6),N(6)-trimethyl-L-lysyl(27)-[histone H3] + 3 S-adenosyl-L-homocysteine + 3 H(+)</text>
        <dbReference type="Rhea" id="RHEA:60292"/>
        <dbReference type="Rhea" id="RHEA-COMP:15535"/>
        <dbReference type="Rhea" id="RHEA-COMP:15548"/>
        <dbReference type="ChEBI" id="CHEBI:15378"/>
        <dbReference type="ChEBI" id="CHEBI:29969"/>
        <dbReference type="ChEBI" id="CHEBI:57856"/>
        <dbReference type="ChEBI" id="CHEBI:59789"/>
        <dbReference type="ChEBI" id="CHEBI:61961"/>
        <dbReference type="EC" id="2.1.1.356"/>
    </reaction>
</comment>
<comment type="subunit">
    <text evidence="6 7 8 14">Interacts directly with FIE via its N-terminal domain. These two proteins are probably indirectly associated with FIS2. In plants, PcG complexes are probably composed of a member of the EZ family (CLF or MEA), FIE, and a member of the VEFS family (FIS2, VRN2 or EMF2). Interacts with TAF13.</text>
</comment>
<comment type="interaction">
    <interactant intactId="EBI-632832">
        <id>O65312</id>
    </interactant>
    <interactant intactId="EBI-307146">
        <id>Q9LT47</id>
        <label>FIE</label>
    </interactant>
    <organismsDiffer>false</organismsDiffer>
    <experiments>12</experiments>
</comment>
<comment type="subcellular location">
    <subcellularLocation>
        <location evidence="7">Nucleus</location>
    </subcellularLocation>
    <text>Excluded from the nucleolus.</text>
</comment>
<comment type="tissue specificity">
    <text evidence="6 7 15">Expressed in unpollinated siliques that contain maturing gametophytes. Not expressed at early stages of floral development during early megagametogenesis.</text>
</comment>
<comment type="developmental stage">
    <text>Expressed both maternally and zygotically. Expressed in both egg and central cell before fertilization. After fertilization, it is expressed in the embryo and endosperm, then decreases during seed maturation.</text>
</comment>
<comment type="induction">
    <text evidence="11">Maternal MEA allele is activated by DME but repressed by MET1 in the central cell of the female gametophyte, the progenitor of the endosperm.</text>
</comment>
<comment type="miscellaneous">
    <text>The MEA locus is imprinted. Maternal inherited gene is expressed in the ovule (the egg and the central cell), while the paternal inherited gene is silenced in the pollen. After fertilization, only the maternal inherited allele is expressed. The paternal repression is dependent on DDM1 protein, which may methylate the paternal locus, while the maternal inherited allele is allowed by the DME protein, which may antagonize or suppress DDM1 dependent methylation, and activates its transcription.</text>
</comment>
<comment type="similarity">
    <text evidence="2">Belongs to the class V-like SAM-binding methyltransferase superfamily. Histone-lysine methyltransferase family. EZ subfamily.</text>
</comment>
<proteinExistence type="evidence at protein level"/>
<dbReference type="EC" id="2.1.1.356"/>
<dbReference type="EMBL" id="AF060485">
    <property type="protein sequence ID" value="AAC39446.1"/>
    <property type="molecule type" value="mRNA"/>
</dbReference>
<dbReference type="EMBL" id="AF096094">
    <property type="protein sequence ID" value="AAD09103.1"/>
    <property type="molecule type" value="Genomic_DNA"/>
</dbReference>
<dbReference type="EMBL" id="AC022521">
    <property type="protein sequence ID" value="AAG10636.1"/>
    <property type="molecule type" value="Genomic_DNA"/>
</dbReference>
<dbReference type="EMBL" id="CP002684">
    <property type="protein sequence ID" value="AEE27447.1"/>
    <property type="molecule type" value="Genomic_DNA"/>
</dbReference>
<dbReference type="PIR" id="T52060">
    <property type="entry name" value="T52060"/>
</dbReference>
<dbReference type="RefSeq" id="NP_563658.1">
    <property type="nucleotide sequence ID" value="NM_100139.4"/>
</dbReference>
<dbReference type="SMR" id="O65312"/>
<dbReference type="BioGRID" id="24657">
    <property type="interactions" value="5"/>
</dbReference>
<dbReference type="FunCoup" id="O65312">
    <property type="interactions" value="1047"/>
</dbReference>
<dbReference type="IntAct" id="O65312">
    <property type="interactions" value="4"/>
</dbReference>
<dbReference type="STRING" id="3702.O65312"/>
<dbReference type="PaxDb" id="3702-AT1G02580.1"/>
<dbReference type="EnsemblPlants" id="AT1G02580.1">
    <property type="protein sequence ID" value="AT1G02580.1"/>
    <property type="gene ID" value="AT1G02580"/>
</dbReference>
<dbReference type="GeneID" id="839422"/>
<dbReference type="Gramene" id="AT1G02580.1">
    <property type="protein sequence ID" value="AT1G02580.1"/>
    <property type="gene ID" value="AT1G02580"/>
</dbReference>
<dbReference type="KEGG" id="ath:AT1G02580"/>
<dbReference type="Araport" id="AT1G02580"/>
<dbReference type="TAIR" id="AT1G02580">
    <property type="gene designation" value="MEA"/>
</dbReference>
<dbReference type="eggNOG" id="KOG1079">
    <property type="taxonomic scope" value="Eukaryota"/>
</dbReference>
<dbReference type="HOGENOM" id="CLU_011060_0_0_1"/>
<dbReference type="InParanoid" id="O65312"/>
<dbReference type="OMA" id="RFDHINN"/>
<dbReference type="PhylomeDB" id="O65312"/>
<dbReference type="PRO" id="PR:O65312"/>
<dbReference type="Proteomes" id="UP000006548">
    <property type="component" value="Chromosome 1"/>
</dbReference>
<dbReference type="ExpressionAtlas" id="O65312">
    <property type="expression patterns" value="baseline and differential"/>
</dbReference>
<dbReference type="GO" id="GO:0005634">
    <property type="term" value="C:nucleus"/>
    <property type="evidence" value="ECO:0000314"/>
    <property type="project" value="TAIR"/>
</dbReference>
<dbReference type="GO" id="GO:0031519">
    <property type="term" value="C:PcG protein complex"/>
    <property type="evidence" value="ECO:0007669"/>
    <property type="project" value="InterPro"/>
</dbReference>
<dbReference type="GO" id="GO:0140951">
    <property type="term" value="F:histone H3K27 trimethyltransferase activity"/>
    <property type="evidence" value="ECO:0007669"/>
    <property type="project" value="UniProtKB-EC"/>
</dbReference>
<dbReference type="GO" id="GO:0043565">
    <property type="term" value="F:sequence-specific DNA binding"/>
    <property type="evidence" value="ECO:0000314"/>
    <property type="project" value="TAIR"/>
</dbReference>
<dbReference type="GO" id="GO:0032259">
    <property type="term" value="P:methylation"/>
    <property type="evidence" value="ECO:0007669"/>
    <property type="project" value="UniProtKB-KW"/>
</dbReference>
<dbReference type="GO" id="GO:0045892">
    <property type="term" value="P:negative regulation of DNA-templated transcription"/>
    <property type="evidence" value="ECO:0000315"/>
    <property type="project" value="TAIR"/>
</dbReference>
<dbReference type="GO" id="GO:2000014">
    <property type="term" value="P:regulation of endosperm development"/>
    <property type="evidence" value="ECO:0000315"/>
    <property type="project" value="TAIR"/>
</dbReference>
<dbReference type="GO" id="GO:0009646">
    <property type="term" value="P:response to absence of light"/>
    <property type="evidence" value="ECO:0000270"/>
    <property type="project" value="TAIR"/>
</dbReference>
<dbReference type="GO" id="GO:0048317">
    <property type="term" value="P:seed morphogenesis"/>
    <property type="evidence" value="ECO:0000316"/>
    <property type="project" value="TAIR"/>
</dbReference>
<dbReference type="CDD" id="cd10519">
    <property type="entry name" value="SET_EZH"/>
    <property type="match status" value="1"/>
</dbReference>
<dbReference type="FunFam" id="2.170.270.10:FF:000001">
    <property type="entry name" value="Putative histone-lysine N-methyltransferase EZH2"/>
    <property type="match status" value="1"/>
</dbReference>
<dbReference type="Gene3D" id="2.170.270.10">
    <property type="entry name" value="SET domain"/>
    <property type="match status" value="1"/>
</dbReference>
<dbReference type="InterPro" id="IPR026489">
    <property type="entry name" value="CXC_dom"/>
</dbReference>
<dbReference type="InterPro" id="IPR045318">
    <property type="entry name" value="EZH1/2-like"/>
</dbReference>
<dbReference type="InterPro" id="IPR025778">
    <property type="entry name" value="Hist-Lys_N-MeTrfase_plant"/>
</dbReference>
<dbReference type="InterPro" id="IPR041355">
    <property type="entry name" value="Pre-SET_CXC"/>
</dbReference>
<dbReference type="InterPro" id="IPR001214">
    <property type="entry name" value="SET_dom"/>
</dbReference>
<dbReference type="InterPro" id="IPR046341">
    <property type="entry name" value="SET_dom_sf"/>
</dbReference>
<dbReference type="InterPro" id="IPR033467">
    <property type="entry name" value="Tesmin/TSO1-like_CXC"/>
</dbReference>
<dbReference type="PANTHER" id="PTHR45747">
    <property type="entry name" value="HISTONE-LYSINE N-METHYLTRANSFERASE E(Z)"/>
    <property type="match status" value="1"/>
</dbReference>
<dbReference type="PANTHER" id="PTHR45747:SF7">
    <property type="entry name" value="HISTONE-LYSINE N-METHYLTRANSFERASE MEDEA"/>
    <property type="match status" value="1"/>
</dbReference>
<dbReference type="Pfam" id="PF18264">
    <property type="entry name" value="preSET_CXC"/>
    <property type="match status" value="1"/>
</dbReference>
<dbReference type="Pfam" id="PF00856">
    <property type="entry name" value="SET"/>
    <property type="match status" value="1"/>
</dbReference>
<dbReference type="SMART" id="SM01114">
    <property type="entry name" value="CXC"/>
    <property type="match status" value="1"/>
</dbReference>
<dbReference type="SMART" id="SM00317">
    <property type="entry name" value="SET"/>
    <property type="match status" value="1"/>
</dbReference>
<dbReference type="SUPFAM" id="SSF82199">
    <property type="entry name" value="SET domain"/>
    <property type="match status" value="1"/>
</dbReference>
<dbReference type="PROSITE" id="PS51633">
    <property type="entry name" value="CXC"/>
    <property type="match status" value="1"/>
</dbReference>
<dbReference type="PROSITE" id="PS51576">
    <property type="entry name" value="SAM_MT43_EZ"/>
    <property type="match status" value="1"/>
</dbReference>
<dbReference type="PROSITE" id="PS50280">
    <property type="entry name" value="SET"/>
    <property type="match status" value="1"/>
</dbReference>
<name>MEDEA_ARATH</name>
<organism>
    <name type="scientific">Arabidopsis thaliana</name>
    <name type="common">Mouse-ear cress</name>
    <dbReference type="NCBI Taxonomy" id="3702"/>
    <lineage>
        <taxon>Eukaryota</taxon>
        <taxon>Viridiplantae</taxon>
        <taxon>Streptophyta</taxon>
        <taxon>Embryophyta</taxon>
        <taxon>Tracheophyta</taxon>
        <taxon>Spermatophyta</taxon>
        <taxon>Magnoliopsida</taxon>
        <taxon>eudicotyledons</taxon>
        <taxon>Gunneridae</taxon>
        <taxon>Pentapetalae</taxon>
        <taxon>rosids</taxon>
        <taxon>malvids</taxon>
        <taxon>Brassicales</taxon>
        <taxon>Brassicaceae</taxon>
        <taxon>Camelineae</taxon>
        <taxon>Arabidopsis</taxon>
    </lineage>
</organism>
<evidence type="ECO:0000255" key="1">
    <source>
        <dbReference type="PROSITE-ProRule" id="PRU00190"/>
    </source>
</evidence>
<evidence type="ECO:0000255" key="2">
    <source>
        <dbReference type="PROSITE-ProRule" id="PRU00909"/>
    </source>
</evidence>
<evidence type="ECO:0000255" key="3">
    <source>
        <dbReference type="PROSITE-ProRule" id="PRU00970"/>
    </source>
</evidence>
<evidence type="ECO:0000256" key="4">
    <source>
        <dbReference type="SAM" id="MobiDB-lite"/>
    </source>
</evidence>
<evidence type="ECO:0000269" key="5">
    <source>
    </source>
</evidence>
<evidence type="ECO:0000269" key="6">
    <source>
    </source>
</evidence>
<evidence type="ECO:0000269" key="7">
    <source>
    </source>
</evidence>
<evidence type="ECO:0000269" key="8">
    <source>
    </source>
</evidence>
<evidence type="ECO:0000269" key="9">
    <source>
    </source>
</evidence>
<evidence type="ECO:0000269" key="10">
    <source>
    </source>
</evidence>
<evidence type="ECO:0000269" key="11">
    <source>
    </source>
</evidence>
<evidence type="ECO:0000269" key="12">
    <source>
    </source>
</evidence>
<evidence type="ECO:0000269" key="13">
    <source>
    </source>
</evidence>
<evidence type="ECO:0000269" key="14">
    <source>
    </source>
</evidence>
<evidence type="ECO:0000269" key="15">
    <source>
    </source>
</evidence>
<accession>O65312</accession>
<gene>
    <name type="primary">MEA</name>
    <name type="synonym">EMB173</name>
    <name type="synonym">FIS1</name>
    <name type="synonym">MEDEA</name>
    <name type="synonym">SDG5</name>
    <name type="synonym">SET5</name>
    <name type="ordered locus">At1g02580</name>
    <name type="ORF">T14P4.11</name>
</gene>
<reference key="1">
    <citation type="journal article" date="1998" name="Science">
        <title>Maternal control of embryogenesis by MEDEA, a polycomb group gene in Arabidopsis.</title>
        <authorList>
            <person name="Grossniklaus U."/>
            <person name="Vielle-Calzada J.-P."/>
            <person name="Hoeppner M.A."/>
            <person name="Gagliano W.B."/>
        </authorList>
    </citation>
    <scope>NUCLEOTIDE SEQUENCE [MRNA]</scope>
    <scope>FUNCTION</scope>
    <scope>TISSUE SPECIFICITY</scope>
    <source>
        <strain>cv. Landsberg erecta</strain>
        <tissue>Flower bud</tissue>
    </source>
</reference>
<reference key="2">
    <citation type="journal article" date="1999" name="Proc. Natl. Acad. Sci. U.S.A.">
        <title>Genes controlling fertilization-independent seed development in Arabidopsis thaliana.</title>
        <authorList>
            <person name="Luo M."/>
            <person name="Bilodeau P."/>
            <person name="Koltunow A."/>
            <person name="Dennis E.S."/>
            <person name="Peacock W.J."/>
            <person name="Chaudhury A."/>
        </authorList>
    </citation>
    <scope>NUCLEOTIDE SEQUENCE [GENOMIC DNA]</scope>
    <source>
        <strain>cv. Landsberg erecta</strain>
        <tissue>Silique</tissue>
    </source>
</reference>
<reference key="3">
    <citation type="journal article" date="2000" name="Nature">
        <title>Sequence and analysis of chromosome 1 of the plant Arabidopsis thaliana.</title>
        <authorList>
            <person name="Theologis A."/>
            <person name="Ecker J.R."/>
            <person name="Palm C.J."/>
            <person name="Federspiel N.A."/>
            <person name="Kaul S."/>
            <person name="White O."/>
            <person name="Alonso J."/>
            <person name="Altafi H."/>
            <person name="Araujo R."/>
            <person name="Bowman C.L."/>
            <person name="Brooks S.Y."/>
            <person name="Buehler E."/>
            <person name="Chan A."/>
            <person name="Chao Q."/>
            <person name="Chen H."/>
            <person name="Cheuk R.F."/>
            <person name="Chin C.W."/>
            <person name="Chung M.K."/>
            <person name="Conn L."/>
            <person name="Conway A.B."/>
            <person name="Conway A.R."/>
            <person name="Creasy T.H."/>
            <person name="Dewar K."/>
            <person name="Dunn P."/>
            <person name="Etgu P."/>
            <person name="Feldblyum T.V."/>
            <person name="Feng J.-D."/>
            <person name="Fong B."/>
            <person name="Fujii C.Y."/>
            <person name="Gill J.E."/>
            <person name="Goldsmith A.D."/>
            <person name="Haas B."/>
            <person name="Hansen N.F."/>
            <person name="Hughes B."/>
            <person name="Huizar L."/>
            <person name="Hunter J.L."/>
            <person name="Jenkins J."/>
            <person name="Johnson-Hopson C."/>
            <person name="Khan S."/>
            <person name="Khaykin E."/>
            <person name="Kim C.J."/>
            <person name="Koo H.L."/>
            <person name="Kremenetskaia I."/>
            <person name="Kurtz D.B."/>
            <person name="Kwan A."/>
            <person name="Lam B."/>
            <person name="Langin-Hooper S."/>
            <person name="Lee A."/>
            <person name="Lee J.M."/>
            <person name="Lenz C.A."/>
            <person name="Li J.H."/>
            <person name="Li Y.-P."/>
            <person name="Lin X."/>
            <person name="Liu S.X."/>
            <person name="Liu Z.A."/>
            <person name="Luros J.S."/>
            <person name="Maiti R."/>
            <person name="Marziali A."/>
            <person name="Militscher J."/>
            <person name="Miranda M."/>
            <person name="Nguyen M."/>
            <person name="Nierman W.C."/>
            <person name="Osborne B.I."/>
            <person name="Pai G."/>
            <person name="Peterson J."/>
            <person name="Pham P.K."/>
            <person name="Rizzo M."/>
            <person name="Rooney T."/>
            <person name="Rowley D."/>
            <person name="Sakano H."/>
            <person name="Salzberg S.L."/>
            <person name="Schwartz J.R."/>
            <person name="Shinn P."/>
            <person name="Southwick A.M."/>
            <person name="Sun H."/>
            <person name="Tallon L.J."/>
            <person name="Tambunga G."/>
            <person name="Toriumi M.J."/>
            <person name="Town C.D."/>
            <person name="Utterback T."/>
            <person name="Van Aken S."/>
            <person name="Vaysberg M."/>
            <person name="Vysotskaia V.S."/>
            <person name="Walker M."/>
            <person name="Wu D."/>
            <person name="Yu G."/>
            <person name="Fraser C.M."/>
            <person name="Venter J.C."/>
            <person name="Davis R.W."/>
        </authorList>
    </citation>
    <scope>NUCLEOTIDE SEQUENCE [LARGE SCALE GENOMIC DNA]</scope>
    <source>
        <strain>cv. Columbia</strain>
    </source>
</reference>
<reference key="4">
    <citation type="journal article" date="2017" name="Plant J.">
        <title>Araport11: a complete reannotation of the Arabidopsis thaliana reference genome.</title>
        <authorList>
            <person name="Cheng C.Y."/>
            <person name="Krishnakumar V."/>
            <person name="Chan A.P."/>
            <person name="Thibaud-Nissen F."/>
            <person name="Schobel S."/>
            <person name="Town C.D."/>
        </authorList>
    </citation>
    <scope>GENOME REANNOTATION</scope>
    <source>
        <strain>cv. Columbia</strain>
    </source>
</reference>
<reference key="5">
    <citation type="journal article" date="1999" name="Genes Dev.">
        <title>Maintenance of genomic imprinting at the Arabidopsis medea locus requires zygotic DDM1 activity.</title>
        <authorList>
            <person name="Vielle-Calzada J.-P."/>
            <person name="Thomas J."/>
            <person name="Spillane C."/>
            <person name="Coluccio A."/>
            <person name="Hoeppner M.A."/>
            <person name="Grossniklaus U."/>
        </authorList>
    </citation>
    <scope>IMPRINTING</scope>
</reference>
<reference key="6">
    <citation type="journal article" date="1999" name="Proc. Natl. Acad. Sci. U.S.A.">
        <title>Control of fertilization-independent endosperm development by the MEDEA polycomb gene in Arabidopsis.</title>
        <authorList>
            <person name="Kiyosue T."/>
            <person name="Ohad N."/>
            <person name="Yadegari R."/>
            <person name="Hannon M."/>
            <person name="Dinneny J."/>
            <person name="Wells D."/>
            <person name="Katz A."/>
            <person name="Margossian L."/>
            <person name="Harada J.J."/>
            <person name="Goldberg R.B."/>
            <person name="Fischer R.L."/>
        </authorList>
    </citation>
    <scope>FUNCTION</scope>
</reference>
<reference key="7">
    <citation type="journal article" date="2000" name="Curr. Biol.">
        <title>Interaction of the Arabidopsis polycomb group proteins FIE and MEA mediates their common phenotypes.</title>
        <authorList>
            <person name="Spillane C."/>
            <person name="MacDougall C."/>
            <person name="Stock C."/>
            <person name="Koehler C."/>
            <person name="Vielle-Calzada J.-P."/>
            <person name="Nunes S.M."/>
            <person name="Grossniklaus U."/>
            <person name="Goodrich J."/>
        </authorList>
    </citation>
    <scope>INTERACTION WITH FIE</scope>
    <scope>SUBCELLULAR LOCATION</scope>
    <scope>TISSUE SPECIFICITY</scope>
</reference>
<reference key="8">
    <citation type="journal article" date="2000" name="Proc. Natl. Acad. Sci. U.S.A.">
        <title>Expression and parent-of-origin effects for FIS2, MEA, and FIE in the endosperm and embryo of developing Arabidopsis seeds.</title>
        <authorList>
            <person name="Luo M."/>
            <person name="Bilodeau P."/>
            <person name="Dennis E.S."/>
            <person name="Peacock W.J."/>
            <person name="Chaudhury A."/>
        </authorList>
    </citation>
    <scope>INTERACTION WITH FIE</scope>
    <scope>TISSUE SPECIFICITY</scope>
</reference>
<reference key="9">
    <citation type="journal article" date="2000" name="Plant Cell">
        <title>Mutations in the FIE and MEA genes that encode interacting polycomb proteins cause parent-of-origin effects on seed development by distinct mechanisms.</title>
        <authorList>
            <person name="Yadegari R."/>
            <person name="Kinoshita T."/>
            <person name="Lotan O."/>
            <person name="Cohen G."/>
            <person name="Katz A."/>
            <person name="Choi Y."/>
            <person name="Katz A."/>
            <person name="Nakashima K."/>
            <person name="Harada J.J."/>
            <person name="Goldberg R.B."/>
            <person name="Fischer R.L."/>
            <person name="Ohad N."/>
        </authorList>
    </citation>
    <scope>INTERACTION WITH FIE</scope>
</reference>
<reference key="10">
    <citation type="journal article" date="2001" name="Curr. Biol.">
        <title>Polycomb group genes control pattern formation in plant seed.</title>
        <authorList>
            <person name="Soerensen M.B."/>
            <person name="Chaudhury A.M."/>
            <person name="Robert H."/>
            <person name="Bancharel E."/>
            <person name="Berger F."/>
        </authorList>
    </citation>
    <scope>FUNCTION</scope>
</reference>
<reference key="11">
    <citation type="journal article" date="2003" name="Dev. Cell">
        <title>Imprinting of the MEA Polycomb gene is controlled by antagonism between MET1 methyltransferase and DME glycosylase.</title>
        <authorList>
            <person name="Xiao W."/>
            <person name="Gehring M."/>
            <person name="Choi Y."/>
            <person name="Margossian L."/>
            <person name="Pu H."/>
            <person name="Harada J.J."/>
            <person name="Goldberg R.B."/>
            <person name="Pennell R.I."/>
            <person name="Fischer R.L."/>
        </authorList>
    </citation>
    <scope>INDUCTION</scope>
</reference>
<reference key="12">
    <citation type="journal article" date="2003" name="Genes Dev.">
        <title>The Polycomb-group protein MEDEA regulates seed development by controlling expression of the MADS-box gene PHERES1.</title>
        <authorList>
            <person name="Koehler C."/>
            <person name="Hennig L."/>
            <person name="Spillane C."/>
            <person name="Pien S."/>
            <person name="Gruissem W."/>
            <person name="Grossniklaus U."/>
        </authorList>
    </citation>
    <scope>FUNCTION</scope>
</reference>
<reference key="13">
    <citation type="journal article" date="2004" name="Development">
        <title>Identification of new members of fertilisation independent seed Polycomb group pathway involved in the control of seed development in Arabidopsis thaliana.</title>
        <authorList>
            <person name="Guitton A.-E."/>
            <person name="Page D.R."/>
            <person name="Chambrier P."/>
            <person name="Lionnet C."/>
            <person name="Faure J.-E."/>
            <person name="Grossniklaus U."/>
            <person name="Berger F."/>
        </authorList>
    </citation>
    <scope>FUNCTION</scope>
</reference>
<reference key="14">
    <citation type="journal article" date="2004" name="Proc. Natl. Acad. Sci. U.S.A.">
        <title>An invariant aspartic acid in the DNA glycosylase domain of DEMETER is necessary for transcriptional activation of the imprinted MEDEA gene.</title>
        <authorList>
            <person name="Choi Y."/>
            <person name="Harada J.J."/>
            <person name="Goldberg R.B."/>
            <person name="Fischer R.L."/>
        </authorList>
    </citation>
    <scope>REGULATION OF IMPRINTING BY DME</scope>
</reference>
<reference key="15">
    <citation type="journal article" date="2005" name="Curr. Opin. Plant Biol.">
        <title>Genomic imprinting in plants: the epigenetic version of an Oedipus complex.</title>
        <authorList>
            <person name="Autran D."/>
            <person name="Huanca-Mamani W."/>
            <person name="Vielle-Calzada J.-P."/>
        </authorList>
    </citation>
    <scope>REVIEW</scope>
</reference>
<reference key="16">
    <citation type="journal article" date="2005" name="Nat. Genet.">
        <title>The Arabidopsis thaliana MEDEA Polycomb group protein controls expression of PHERES1 by parental imprinting.</title>
        <authorList>
            <person name="Koehler C."/>
            <person name="Page D.R."/>
            <person name="Gagliardini V."/>
            <person name="Grossniklaus U."/>
        </authorList>
    </citation>
    <scope>FUNCTION</scope>
</reference>
<reference key="17">
    <citation type="journal article" date="2013" name="Dev. Biol.">
        <title>TAF13 interacts with PRC2 members and is essential for Arabidopsis seed development.</title>
        <authorList>
            <person name="Lindner M."/>
            <person name="Simonini S."/>
            <person name="Kooiker M."/>
            <person name="Gagliardini V."/>
            <person name="Somssich M."/>
            <person name="Hohenstatt M."/>
            <person name="Simon R."/>
            <person name="Grossniklaus U."/>
            <person name="Kater M.M."/>
        </authorList>
    </citation>
    <scope>INTERACTION WITH TAF13</scope>
</reference>
<feature type="chain" id="PRO_0000213997" description="Histone-lysine N-methyltransferase MEDEA">
    <location>
        <begin position="1"/>
        <end position="689"/>
    </location>
</feature>
<feature type="domain" description="SANT">
    <location>
        <begin position="339"/>
        <end position="389"/>
    </location>
</feature>
<feature type="domain" description="CXC" evidence="3">
    <location>
        <begin position="428"/>
        <end position="532"/>
    </location>
</feature>
<feature type="domain" description="SET" evidence="1">
    <location>
        <begin position="544"/>
        <end position="659"/>
    </location>
</feature>
<feature type="region of interest" description="Interaction with FIE">
    <location>
        <begin position="1"/>
        <end position="109"/>
    </location>
</feature>
<feature type="region of interest" description="Disordered" evidence="4">
    <location>
        <begin position="1"/>
        <end position="20"/>
    </location>
</feature>
<feature type="region of interest" description="Disordered" evidence="4">
    <location>
        <begin position="51"/>
        <end position="73"/>
    </location>
</feature>
<feature type="region of interest" description="Disordered" evidence="4">
    <location>
        <begin position="169"/>
        <end position="188"/>
    </location>
</feature>
<feature type="region of interest" description="Disordered" evidence="4">
    <location>
        <begin position="666"/>
        <end position="689"/>
    </location>
</feature>
<feature type="compositionally biased region" description="Acidic residues" evidence="4">
    <location>
        <begin position="171"/>
        <end position="184"/>
    </location>
</feature>
<keyword id="KW-0217">Developmental protein</keyword>
<keyword id="KW-0489">Methyltransferase</keyword>
<keyword id="KW-0539">Nucleus</keyword>
<keyword id="KW-1185">Reference proteome</keyword>
<keyword id="KW-0678">Repressor</keyword>
<keyword id="KW-0949">S-adenosyl-L-methionine</keyword>
<keyword id="KW-0804">Transcription</keyword>
<keyword id="KW-0805">Transcription regulation</keyword>
<keyword id="KW-0808">Transferase</keyword>
<protein>
    <recommendedName>
        <fullName>Histone-lysine N-methyltransferase MEDEA</fullName>
        <ecNumber>2.1.1.356</ecNumber>
    </recommendedName>
    <alternativeName>
        <fullName>Maternal embryogenesis control protein</fullName>
    </alternativeName>
    <alternativeName>
        <fullName>Protein EMBRYO DEFECTIVE 173</fullName>
    </alternativeName>
    <alternativeName>
        <fullName>Protein FERTILIZATION-INDEPENDENT SEED 1</fullName>
    </alternativeName>
    <alternativeName>
        <fullName>Protein SET DOMAIN GROUP 5</fullName>
    </alternativeName>
</protein>
<sequence length="689" mass="79310">MEKENHEDDGEGLPPELNQIKEQIEKERFLHIKRKFELRYIPSVATHASHHQSFDLNQPAAEDDNGGDNKSLLSRMQNPLRHFSASSDYNSYEDQGYVLDEDQDYALEEDVPLFLDEDVPLLPSVKLPIVEKLPRSITWVFTKSSQLMAESDSVIGKRQIYYLNGEALELSSEEDEEDEEEDEEEIKKEKCEFSEDVDRFIWTVGQDYGLDDLVVRRALAKYLEVDVSDILERYNELKLKNDGTAGEASDLTSKTITTAFQDFADRRHCRRCMIFDCHMHEKYEPESRSSEDKSSLFEDEDRQPCSEHCYLKVRSVTEADHVMDNDNSISNKIVVSDPNNTMWTPVEKDLYLKGIEIFGRNSCDVALNILRGLKTCLEIYNYMREQDQCTMSLDLNKTTQRHNQVTKKVSRKSSRSVRKKSRLRKYARYPPALKKTTSGEAKFYKHYTPCTCKSKCGQQCPCLTHENCCEKYCGCSKDCNNRFGGCNCAIGQCTNRQCPCFAANRECDPDLCRSCPLSCGDGTLGETPVQIQCKNMQFLLQTNKKILIGKSDVHGWGAFTWDSLKKNEYLGEYTGELITHDEANERGRIEDRIGSSYLFTLNDQLEIDARRKGNEFKFLNHSARPNCYAKLMIVRGDQRIGLFAERAIEEGEELFFDYCYGPEHADWSRGREPRKTGASKRSKEARPAR</sequence>